<gene>
    <name evidence="1" type="primary">apt</name>
    <name type="ordered locus">IL1850</name>
</gene>
<dbReference type="EC" id="2.4.2.7" evidence="1"/>
<dbReference type="EMBL" id="AE017340">
    <property type="protein sequence ID" value="AAV82682.1"/>
    <property type="molecule type" value="Genomic_DNA"/>
</dbReference>
<dbReference type="RefSeq" id="WP_011235082.1">
    <property type="nucleotide sequence ID" value="NC_006512.1"/>
</dbReference>
<dbReference type="SMR" id="Q5QWS1"/>
<dbReference type="STRING" id="283942.IL1850"/>
<dbReference type="GeneID" id="41337034"/>
<dbReference type="KEGG" id="ilo:IL1850"/>
<dbReference type="eggNOG" id="COG0503">
    <property type="taxonomic scope" value="Bacteria"/>
</dbReference>
<dbReference type="HOGENOM" id="CLU_063339_3_0_6"/>
<dbReference type="OrthoDB" id="9803963at2"/>
<dbReference type="UniPathway" id="UPA00588">
    <property type="reaction ID" value="UER00646"/>
</dbReference>
<dbReference type="Proteomes" id="UP000001171">
    <property type="component" value="Chromosome"/>
</dbReference>
<dbReference type="GO" id="GO:0005829">
    <property type="term" value="C:cytosol"/>
    <property type="evidence" value="ECO:0007669"/>
    <property type="project" value="TreeGrafter"/>
</dbReference>
<dbReference type="GO" id="GO:0003999">
    <property type="term" value="F:adenine phosphoribosyltransferase activity"/>
    <property type="evidence" value="ECO:0007669"/>
    <property type="project" value="UniProtKB-UniRule"/>
</dbReference>
<dbReference type="GO" id="GO:0006168">
    <property type="term" value="P:adenine salvage"/>
    <property type="evidence" value="ECO:0007669"/>
    <property type="project" value="InterPro"/>
</dbReference>
<dbReference type="GO" id="GO:0044209">
    <property type="term" value="P:AMP salvage"/>
    <property type="evidence" value="ECO:0007669"/>
    <property type="project" value="UniProtKB-UniRule"/>
</dbReference>
<dbReference type="GO" id="GO:0006166">
    <property type="term" value="P:purine ribonucleoside salvage"/>
    <property type="evidence" value="ECO:0007669"/>
    <property type="project" value="UniProtKB-KW"/>
</dbReference>
<dbReference type="CDD" id="cd06223">
    <property type="entry name" value="PRTases_typeI"/>
    <property type="match status" value="1"/>
</dbReference>
<dbReference type="FunFam" id="3.40.50.2020:FF:000004">
    <property type="entry name" value="Adenine phosphoribosyltransferase"/>
    <property type="match status" value="1"/>
</dbReference>
<dbReference type="Gene3D" id="3.40.50.2020">
    <property type="match status" value="1"/>
</dbReference>
<dbReference type="HAMAP" id="MF_00004">
    <property type="entry name" value="Aden_phosphoribosyltr"/>
    <property type="match status" value="1"/>
</dbReference>
<dbReference type="InterPro" id="IPR005764">
    <property type="entry name" value="Ade_phspho_trans"/>
</dbReference>
<dbReference type="InterPro" id="IPR050120">
    <property type="entry name" value="Adenine_PRTase"/>
</dbReference>
<dbReference type="InterPro" id="IPR000836">
    <property type="entry name" value="PRibTrfase_dom"/>
</dbReference>
<dbReference type="InterPro" id="IPR029057">
    <property type="entry name" value="PRTase-like"/>
</dbReference>
<dbReference type="NCBIfam" id="TIGR01090">
    <property type="entry name" value="apt"/>
    <property type="match status" value="1"/>
</dbReference>
<dbReference type="NCBIfam" id="NF002634">
    <property type="entry name" value="PRK02304.1-3"/>
    <property type="match status" value="1"/>
</dbReference>
<dbReference type="NCBIfam" id="NF002636">
    <property type="entry name" value="PRK02304.1-5"/>
    <property type="match status" value="1"/>
</dbReference>
<dbReference type="PANTHER" id="PTHR11776">
    <property type="entry name" value="ADENINE PHOSPHORIBOSYLTRANSFERASE"/>
    <property type="match status" value="1"/>
</dbReference>
<dbReference type="PANTHER" id="PTHR11776:SF7">
    <property type="entry name" value="PHOSPHORIBOSYLTRANSFERASE DOMAIN-CONTAINING PROTEIN"/>
    <property type="match status" value="1"/>
</dbReference>
<dbReference type="Pfam" id="PF00156">
    <property type="entry name" value="Pribosyltran"/>
    <property type="match status" value="1"/>
</dbReference>
<dbReference type="SUPFAM" id="SSF53271">
    <property type="entry name" value="PRTase-like"/>
    <property type="match status" value="1"/>
</dbReference>
<dbReference type="PROSITE" id="PS00103">
    <property type="entry name" value="PUR_PYR_PR_TRANSFER"/>
    <property type="match status" value="1"/>
</dbReference>
<accession>Q5QWS1</accession>
<protein>
    <recommendedName>
        <fullName evidence="1">Adenine phosphoribosyltransferase</fullName>
        <shortName evidence="1">APRT</shortName>
        <ecNumber evidence="1">2.4.2.7</ecNumber>
    </recommendedName>
</protein>
<feature type="chain" id="PRO_0000149396" description="Adenine phosphoribosyltransferase">
    <location>
        <begin position="1"/>
        <end position="177"/>
    </location>
</feature>
<organism>
    <name type="scientific">Idiomarina loihiensis (strain ATCC BAA-735 / DSM 15497 / L2-TR)</name>
    <dbReference type="NCBI Taxonomy" id="283942"/>
    <lineage>
        <taxon>Bacteria</taxon>
        <taxon>Pseudomonadati</taxon>
        <taxon>Pseudomonadota</taxon>
        <taxon>Gammaproteobacteria</taxon>
        <taxon>Alteromonadales</taxon>
        <taxon>Idiomarinaceae</taxon>
        <taxon>Idiomarina</taxon>
    </lineage>
</organism>
<keyword id="KW-0963">Cytoplasm</keyword>
<keyword id="KW-0328">Glycosyltransferase</keyword>
<keyword id="KW-0660">Purine salvage</keyword>
<keyword id="KW-1185">Reference proteome</keyword>
<keyword id="KW-0808">Transferase</keyword>
<reference key="1">
    <citation type="journal article" date="2004" name="Proc. Natl. Acad. Sci. U.S.A.">
        <title>Genome sequence of the deep-sea gamma-proteobacterium Idiomarina loihiensis reveals amino acid fermentation as a source of carbon and energy.</title>
        <authorList>
            <person name="Hou S."/>
            <person name="Saw J.H."/>
            <person name="Lee K.S."/>
            <person name="Freitas T.A."/>
            <person name="Belisle C."/>
            <person name="Kawarabayasi Y."/>
            <person name="Donachie S.P."/>
            <person name="Pikina A."/>
            <person name="Galperin M.Y."/>
            <person name="Koonin E.V."/>
            <person name="Makarova K.S."/>
            <person name="Omelchenko M.V."/>
            <person name="Sorokin A."/>
            <person name="Wolf Y.I."/>
            <person name="Li Q.X."/>
            <person name="Keum Y.S."/>
            <person name="Campbell S."/>
            <person name="Denery J."/>
            <person name="Aizawa S."/>
            <person name="Shibata S."/>
            <person name="Malahoff A."/>
            <person name="Alam M."/>
        </authorList>
    </citation>
    <scope>NUCLEOTIDE SEQUENCE [LARGE SCALE GENOMIC DNA]</scope>
    <source>
        <strain>ATCC BAA-735 / DSM 15497 / L2-TR</strain>
    </source>
</reference>
<sequence length="177" mass="18997">MESATTDIRDSIGSIPDYPKPGIIFRDITPLLQNPDAFRLTINTLKQRYAGQGITQIAAVEARGFIFGSALAYAMGCGVTLLRKPGKLPGKVTRQNYELEYGSDELQMHENALTENDRVLIVDDLLATGGTVVAASQLIKSSGADVVEAAFVVSLPELGGEDKLQQAGVACYTLCQF</sequence>
<proteinExistence type="inferred from homology"/>
<name>APT_IDILO</name>
<evidence type="ECO:0000255" key="1">
    <source>
        <dbReference type="HAMAP-Rule" id="MF_00004"/>
    </source>
</evidence>
<comment type="function">
    <text evidence="1">Catalyzes a salvage reaction resulting in the formation of AMP, that is energically less costly than de novo synthesis.</text>
</comment>
<comment type="catalytic activity">
    <reaction evidence="1">
        <text>AMP + diphosphate = 5-phospho-alpha-D-ribose 1-diphosphate + adenine</text>
        <dbReference type="Rhea" id="RHEA:16609"/>
        <dbReference type="ChEBI" id="CHEBI:16708"/>
        <dbReference type="ChEBI" id="CHEBI:33019"/>
        <dbReference type="ChEBI" id="CHEBI:58017"/>
        <dbReference type="ChEBI" id="CHEBI:456215"/>
        <dbReference type="EC" id="2.4.2.7"/>
    </reaction>
</comment>
<comment type="pathway">
    <text evidence="1">Purine metabolism; AMP biosynthesis via salvage pathway; AMP from adenine: step 1/1.</text>
</comment>
<comment type="subunit">
    <text evidence="1">Homodimer.</text>
</comment>
<comment type="subcellular location">
    <subcellularLocation>
        <location evidence="1">Cytoplasm</location>
    </subcellularLocation>
</comment>
<comment type="similarity">
    <text evidence="1">Belongs to the purine/pyrimidine phosphoribosyltransferase family.</text>
</comment>